<organism>
    <name type="scientific">Caballeronia sordidicola</name>
    <name type="common">Burkholderia sordidicola</name>
    <dbReference type="NCBI Taxonomy" id="196367"/>
    <lineage>
        <taxon>Bacteria</taxon>
        <taxon>Pseudomonadati</taxon>
        <taxon>Pseudomonadota</taxon>
        <taxon>Betaproteobacteria</taxon>
        <taxon>Burkholderiales</taxon>
        <taxon>Burkholderiaceae</taxon>
        <taxon>Caballeronia</taxon>
    </lineage>
</organism>
<proteinExistence type="evidence at protein level"/>
<name>EPOXH_CABSO</name>
<sequence>MEFNDMTSDITGGVKEYDIATNGISLHVTEQGAGPAVLFCHGFPDTSYTWRRQMNAIASAGYRAIAPDMRGYGRSSAPADASLYTPLHTTGDLIGLLDALKISSAVLVGHDWGATHAWNAALMRPDRFKAVFGLSVPFVTRGESSVFERMRESGRQDDFYMFEQIRPDADQIWADAAVTIPGILYWASGSAPEGEQWSPLDRTRSLYRAAPGPLPSWAEADYVAHNIAEFRRTGFHGGLNYYRAAEPYFTLSAPWKGAKITQPSFFIWGKSDGLKELYPFTLQQMRAGLPGLMGGLELDNVGHWVQHEASAEVSEQLVRFLRTVDAVLS</sequence>
<protein>
    <recommendedName>
        <fullName evidence="4">Epoxide hydrolase</fullName>
        <ecNumber evidence="3">3.3.2.10</ecNumber>
    </recommendedName>
    <alternativeName>
        <fullName evidence="4">CaEH</fullName>
    </alternativeName>
</protein>
<evidence type="ECO:0000250" key="1">
    <source>
        <dbReference type="UniProtKB" id="P34913"/>
    </source>
</evidence>
<evidence type="ECO:0000255" key="2"/>
<evidence type="ECO:0000269" key="3">
    <source>
    </source>
</evidence>
<evidence type="ECO:0000303" key="4">
    <source>
    </source>
</evidence>
<evidence type="ECO:0000305" key="5"/>
<evidence type="ECO:0000312" key="6">
    <source>
        <dbReference type="EMBL" id="OTP67222.1"/>
    </source>
</evidence>
<evidence type="ECO:0007744" key="7">
    <source>
        <dbReference type="PDB" id="8HM5"/>
    </source>
</evidence>
<evidence type="ECO:0007829" key="8">
    <source>
        <dbReference type="PDB" id="8HM5"/>
    </source>
</evidence>
<keyword id="KW-0002">3D-structure</keyword>
<keyword id="KW-0378">Hydrolase</keyword>
<accession>A0A242M8J4</accession>
<dbReference type="EC" id="3.3.2.10" evidence="3"/>
<dbReference type="EMBL" id="NBTY01000198">
    <property type="protein sequence ID" value="OTP67222.1"/>
    <property type="molecule type" value="Genomic_DNA"/>
</dbReference>
<dbReference type="PDB" id="8HM5">
    <property type="method" value="X-ray"/>
    <property type="resolution" value="2.43 A"/>
    <property type="chains" value="A/B=6-329"/>
</dbReference>
<dbReference type="PDBsum" id="8HM5"/>
<dbReference type="SMR" id="A0A242M8J4"/>
<dbReference type="ESTHER" id="9burk-a0a242m8j4">
    <property type="family name" value="Epoxide_hydrolase"/>
</dbReference>
<dbReference type="Proteomes" id="UP000194546">
    <property type="component" value="Unassembled WGS sequence"/>
</dbReference>
<dbReference type="GO" id="GO:0016787">
    <property type="term" value="F:hydrolase activity"/>
    <property type="evidence" value="ECO:0007669"/>
    <property type="project" value="UniProtKB-KW"/>
</dbReference>
<dbReference type="Gene3D" id="3.40.50.1820">
    <property type="entry name" value="alpha/beta hydrolase"/>
    <property type="match status" value="1"/>
</dbReference>
<dbReference type="InterPro" id="IPR000073">
    <property type="entry name" value="AB_hydrolase_1"/>
</dbReference>
<dbReference type="InterPro" id="IPR029058">
    <property type="entry name" value="AB_hydrolase_fold"/>
</dbReference>
<dbReference type="InterPro" id="IPR000639">
    <property type="entry name" value="Epox_hydrolase-like"/>
</dbReference>
<dbReference type="PANTHER" id="PTHR43329">
    <property type="entry name" value="EPOXIDE HYDROLASE"/>
    <property type="match status" value="1"/>
</dbReference>
<dbReference type="Pfam" id="PF00561">
    <property type="entry name" value="Abhydrolase_1"/>
    <property type="match status" value="1"/>
</dbReference>
<dbReference type="PRINTS" id="PR00111">
    <property type="entry name" value="ABHYDROLASE"/>
</dbReference>
<dbReference type="PRINTS" id="PR00412">
    <property type="entry name" value="EPOXHYDRLASE"/>
</dbReference>
<dbReference type="SUPFAM" id="SSF53474">
    <property type="entry name" value="alpha/beta-Hydrolases"/>
    <property type="match status" value="1"/>
</dbReference>
<gene>
    <name evidence="6" type="ORF">PAMC26510_32755</name>
</gene>
<comment type="function">
    <text evidence="3">Catalyzes the hydrolysis of various epoxides into diols. In vitro, shows the strongest activity toward aromatic and cyclic aliphatic epoxide compounds, since it shows strong activity toward (R)-styrene oxide, (S)-styrene oxide, and 3,4-epoxy-1-cyclohexene, but very weak activity toward (R)-epichlorohydrin, (S)-epichlorohydrin, and 1,2-epoxy-9-decene.</text>
</comment>
<comment type="catalytic activity">
    <reaction evidence="3">
        <text>an epoxide + H2O = an ethanediol</text>
        <dbReference type="Rhea" id="RHEA:19037"/>
        <dbReference type="ChEBI" id="CHEBI:15377"/>
        <dbReference type="ChEBI" id="CHEBI:32955"/>
        <dbReference type="ChEBI" id="CHEBI:140594"/>
        <dbReference type="EC" id="3.3.2.10"/>
    </reaction>
</comment>
<comment type="catalytic activity">
    <reaction evidence="3">
        <text>(R)-styrene oxide + H2O = (R)-styrene glycol</text>
        <dbReference type="Rhea" id="RHEA:80791"/>
        <dbReference type="ChEBI" id="CHEBI:15377"/>
        <dbReference type="ChEBI" id="CHEBI:45389"/>
        <dbReference type="ChEBI" id="CHEBI:231713"/>
    </reaction>
</comment>
<comment type="catalytic activity">
    <reaction evidence="3">
        <text>(S)-styrene oxide + H2O = (S)-styrene glycol</text>
        <dbReference type="Rhea" id="RHEA:80795"/>
        <dbReference type="ChEBI" id="CHEBI:15377"/>
        <dbReference type="ChEBI" id="CHEBI:51014"/>
        <dbReference type="ChEBI" id="CHEBI:231714"/>
    </reaction>
</comment>
<comment type="catalytic activity">
    <reaction evidence="3">
        <text>3,4-epoxy-1-cyclohexene + H2O = cyclohex-3-ene-1,2-diol</text>
        <dbReference type="Rhea" id="RHEA:80799"/>
        <dbReference type="ChEBI" id="CHEBI:15377"/>
        <dbReference type="ChEBI" id="CHEBI:229725"/>
        <dbReference type="ChEBI" id="CHEBI:231715"/>
    </reaction>
</comment>
<comment type="subunit">
    <text evidence="3">Homodimer.</text>
</comment>
<comment type="similarity">
    <text evidence="5">Belongs to the AB hydrolase superfamily. Epoxide hydrolase family.</text>
</comment>
<feature type="chain" id="PRO_0000461421" description="Epoxide hydrolase">
    <location>
        <begin position="1"/>
        <end position="329"/>
    </location>
</feature>
<feature type="domain" description="AB hydrolase-1" evidence="2">
    <location>
        <begin position="35"/>
        <end position="308"/>
    </location>
</feature>
<feature type="active site" description="Nucleophile" evidence="1">
    <location>
        <position position="111"/>
    </location>
</feature>
<feature type="active site" description="Proton donor" evidence="1">
    <location>
        <position position="242"/>
    </location>
</feature>
<feature type="active site" description="Proton acceptor" evidence="1">
    <location>
        <position position="303"/>
    </location>
</feature>
<feature type="mutagenesis site" description="Large decrease in activity toward (R)-styrene oxide." evidence="3">
    <original>D</original>
    <variation>A</variation>
    <location>
        <position position="111"/>
    </location>
</feature>
<feature type="mutagenesis site" description="No significant change in substrate specificity toward linear aliphatic and aromatic substrates." evidence="3">
    <original>T</original>
    <variation>Y</variation>
    <location>
        <position position="115"/>
    </location>
</feature>
<feature type="mutagenesis site" description="No significant change in substrate specificity toward linear aliphatic and aromatic substrates." evidence="3">
    <original>V</original>
    <variation>W</variation>
    <location>
        <position position="136"/>
    </location>
</feature>
<feature type="strand" evidence="8">
    <location>
        <begin position="15"/>
        <end position="21"/>
    </location>
</feature>
<feature type="strand" evidence="8">
    <location>
        <begin position="24"/>
        <end position="31"/>
    </location>
</feature>
<feature type="strand" evidence="8">
    <location>
        <begin position="34"/>
        <end position="40"/>
    </location>
</feature>
<feature type="helix" evidence="8">
    <location>
        <begin position="47"/>
        <end position="50"/>
    </location>
</feature>
<feature type="helix" evidence="8">
    <location>
        <begin position="51"/>
        <end position="59"/>
    </location>
</feature>
<feature type="strand" evidence="8">
    <location>
        <begin position="63"/>
        <end position="67"/>
    </location>
</feature>
<feature type="helix" evidence="8">
    <location>
        <begin position="81"/>
        <end position="83"/>
    </location>
</feature>
<feature type="helix" evidence="8">
    <location>
        <begin position="86"/>
        <end position="99"/>
    </location>
</feature>
<feature type="strand" evidence="8">
    <location>
        <begin position="105"/>
        <end position="110"/>
    </location>
</feature>
<feature type="helix" evidence="8">
    <location>
        <begin position="112"/>
        <end position="123"/>
    </location>
</feature>
<feature type="turn" evidence="8">
    <location>
        <begin position="125"/>
        <end position="127"/>
    </location>
</feature>
<feature type="strand" evidence="8">
    <location>
        <begin position="128"/>
        <end position="136"/>
    </location>
</feature>
<feature type="helix" evidence="8">
    <location>
        <begin position="146"/>
        <end position="152"/>
    </location>
</feature>
<feature type="turn" evidence="8">
    <location>
        <begin position="156"/>
        <end position="158"/>
    </location>
</feature>
<feature type="helix" evidence="8">
    <location>
        <begin position="160"/>
        <end position="165"/>
    </location>
</feature>
<feature type="helix" evidence="8">
    <location>
        <begin position="169"/>
        <end position="173"/>
    </location>
</feature>
<feature type="helix" evidence="8">
    <location>
        <begin position="176"/>
        <end position="186"/>
    </location>
</feature>
<feature type="turn" evidence="8">
    <location>
        <begin position="193"/>
        <end position="195"/>
    </location>
</feature>
<feature type="strand" evidence="8">
    <location>
        <begin position="211"/>
        <end position="213"/>
    </location>
</feature>
<feature type="helix" evidence="8">
    <location>
        <begin position="220"/>
        <end position="233"/>
    </location>
</feature>
<feature type="helix" evidence="8">
    <location>
        <begin position="236"/>
        <end position="251"/>
    </location>
</feature>
<feature type="helix" evidence="8">
    <location>
        <begin position="253"/>
        <end position="255"/>
    </location>
</feature>
<feature type="strand" evidence="8">
    <location>
        <begin position="264"/>
        <end position="269"/>
    </location>
</feature>
<feature type="helix" evidence="8">
    <location>
        <begin position="273"/>
        <end position="277"/>
    </location>
</feature>
<feature type="helix" evidence="8">
    <location>
        <begin position="282"/>
        <end position="285"/>
    </location>
</feature>
<feature type="turn" evidence="8">
    <location>
        <begin position="286"/>
        <end position="288"/>
    </location>
</feature>
<feature type="strand" evidence="8">
    <location>
        <begin position="292"/>
        <end position="298"/>
    </location>
</feature>
<feature type="helix" evidence="8">
    <location>
        <begin position="305"/>
        <end position="308"/>
    </location>
</feature>
<feature type="helix" evidence="8">
    <location>
        <begin position="310"/>
        <end position="326"/>
    </location>
</feature>
<reference key="1">
    <citation type="submission" date="2017-03" db="EMBL/GenBank/DDBJ databases">
        <title>Genome analysis of strain PAMC 26510.</title>
        <authorList>
            <person name="Oh H.-M."/>
            <person name="Yang J.-A."/>
        </authorList>
    </citation>
    <scope>NUCLEOTIDE SEQUENCE [LARGE SCALE GENOMIC DNA]</scope>
    <source>
        <strain>PAMC 26510</strain>
    </source>
</reference>
<reference evidence="7" key="2">
    <citation type="journal article" date="2024" name="Int. J. Biol. Macromol.">
        <title>Structural insights into the distinct substrate preferences of two bacterial epoxide hydrolases.</title>
        <authorList>
            <person name="Hwang J."/>
            <person name="Lee M.J."/>
            <person name="Lee S.G."/>
            <person name="Do H."/>
            <person name="Lee J.H."/>
        </authorList>
    </citation>
    <scope>X-RAY CRYSTALLOGRAPHY (2.43 ANGSTROMS) OF 6-329</scope>
    <scope>FUNCTION</scope>
    <scope>CATALYTIC ACTIVITY</scope>
    <scope>SUBSTRATE SPECIFICITY</scope>
    <scope>SUBUNIT</scope>
    <scope>MUTAGENESIS OF ASP-111; THR-115 AND VAL-136</scope>
    <source>
        <strain>PAMC 26510</strain>
    </source>
</reference>